<protein>
    <recommendedName>
        <fullName evidence="1">Putative uncharacterized protein YIR030W-A</fullName>
    </recommendedName>
</protein>
<sequence>MSSICHTLSGLISSNLIGLCVKTAPKILRIFVRLCTYTFYNLLKSTGLALGLIISSYNKVVKKSLKILPVTSGKKYLAAKANLFFSPSGLAEANFAVSSFNILAVNSGVTLSPVSLKTTPCLTHWYN</sequence>
<accession>A0A023PZK4</accession>
<gene>
    <name evidence="3" type="ordered locus">YIR030W-A</name>
</gene>
<comment type="miscellaneous">
    <text evidence="1">Partially overlaps DAL7.</text>
</comment>
<comment type="caution">
    <text evidence="2">Product of a dubious gene prediction unlikely to encode a functional protein. Because of that it is not part of the S.cerevisiae S288c complete/reference proteome set.</text>
</comment>
<name>YI30A_YEAST</name>
<proteinExistence type="uncertain"/>
<reference key="1">
    <citation type="journal article" date="1997" name="Nature">
        <title>The nucleotide sequence of Saccharomyces cerevisiae chromosome IX.</title>
        <authorList>
            <person name="Churcher C.M."/>
            <person name="Bowman S."/>
            <person name="Badcock K."/>
            <person name="Bankier A.T."/>
            <person name="Brown D."/>
            <person name="Chillingworth T."/>
            <person name="Connor R."/>
            <person name="Devlin K."/>
            <person name="Gentles S."/>
            <person name="Hamlin N."/>
            <person name="Harris D.E."/>
            <person name="Horsnell T."/>
            <person name="Hunt S."/>
            <person name="Jagels K."/>
            <person name="Jones M."/>
            <person name="Lye G."/>
            <person name="Moule S."/>
            <person name="Odell C."/>
            <person name="Pearson D."/>
            <person name="Rajandream M.A."/>
            <person name="Rice P."/>
            <person name="Rowley N."/>
            <person name="Skelton J."/>
            <person name="Smith V."/>
            <person name="Walsh S.V."/>
            <person name="Whitehead S."/>
            <person name="Barrell B.G."/>
        </authorList>
    </citation>
    <scope>NUCLEOTIDE SEQUENCE [LARGE SCALE GENOMIC DNA]</scope>
    <source>
        <strain>ATCC 204508 / S288c</strain>
    </source>
</reference>
<reference key="2">
    <citation type="journal article" date="2014" name="G3 (Bethesda)">
        <title>The reference genome sequence of Saccharomyces cerevisiae: Then and now.</title>
        <authorList>
            <person name="Engel S.R."/>
            <person name="Dietrich F.S."/>
            <person name="Fisk D.G."/>
            <person name="Binkley G."/>
            <person name="Balakrishnan R."/>
            <person name="Costanzo M.C."/>
            <person name="Dwight S.S."/>
            <person name="Hitz B.C."/>
            <person name="Karra K."/>
            <person name="Nash R.S."/>
            <person name="Weng S."/>
            <person name="Wong E.D."/>
            <person name="Lloyd P."/>
            <person name="Skrzypek M.S."/>
            <person name="Miyasato S.R."/>
            <person name="Simison M."/>
            <person name="Cherry J.M."/>
        </authorList>
    </citation>
    <scope>GENOME REANNOTATION</scope>
    <source>
        <strain>ATCC 204508 / S288c</strain>
    </source>
</reference>
<organism>
    <name type="scientific">Saccharomyces cerevisiae (strain ATCC 204508 / S288c)</name>
    <name type="common">Baker's yeast</name>
    <dbReference type="NCBI Taxonomy" id="559292"/>
    <lineage>
        <taxon>Eukaryota</taxon>
        <taxon>Fungi</taxon>
        <taxon>Dikarya</taxon>
        <taxon>Ascomycota</taxon>
        <taxon>Saccharomycotina</taxon>
        <taxon>Saccharomycetes</taxon>
        <taxon>Saccharomycetales</taxon>
        <taxon>Saccharomycetaceae</taxon>
        <taxon>Saccharomyces</taxon>
    </lineage>
</organism>
<evidence type="ECO:0000305" key="1"/>
<evidence type="ECO:0000305" key="2">
    <source>
    </source>
</evidence>
<evidence type="ECO:0000312" key="3">
    <source>
        <dbReference type="SGD" id="S000028802"/>
    </source>
</evidence>
<feature type="chain" id="PRO_0000431041" description="Putative uncharacterized protein YIR030W-A">
    <location>
        <begin position="1"/>
        <end position="127"/>
    </location>
</feature>
<dbReference type="EMBL" id="KJ412279">
    <property type="protein sequence ID" value="AHX39322.1"/>
    <property type="molecule type" value="Genomic_DNA"/>
</dbReference>
<dbReference type="PaxDb" id="4932-YIR030W-A"/>
<dbReference type="EnsemblFungi" id="YIR030W-A_mRNA">
    <property type="protein sequence ID" value="YIR030W-A"/>
    <property type="gene ID" value="YIR030W-A"/>
</dbReference>
<dbReference type="AGR" id="SGD:S000028802"/>
<dbReference type="SGD" id="S000028802">
    <property type="gene designation" value="YIR030W-A"/>
</dbReference>
<dbReference type="HOGENOM" id="CLU_1971769_0_0_1"/>